<organism>
    <name type="scientific">Mus musculus</name>
    <name type="common">Mouse</name>
    <dbReference type="NCBI Taxonomy" id="10090"/>
    <lineage>
        <taxon>Eukaryota</taxon>
        <taxon>Metazoa</taxon>
        <taxon>Chordata</taxon>
        <taxon>Craniata</taxon>
        <taxon>Vertebrata</taxon>
        <taxon>Euteleostomi</taxon>
        <taxon>Mammalia</taxon>
        <taxon>Eutheria</taxon>
        <taxon>Euarchontoglires</taxon>
        <taxon>Glires</taxon>
        <taxon>Rodentia</taxon>
        <taxon>Myomorpha</taxon>
        <taxon>Muroidea</taxon>
        <taxon>Muridae</taxon>
        <taxon>Murinae</taxon>
        <taxon>Mus</taxon>
        <taxon>Mus</taxon>
    </lineage>
</organism>
<accession>P70298</accession>
<accession>Q6P1E6</accession>
<sequence length="1426" mass="154664">MVAPVLKSFQAEVVALSKRSREAEAAFLSVYKQLIEAPDPVPSFEVARTLDDRLQRPSFDPSGQRLQDVHIAWKRCPEPPSAREQNEGTCPTGHTPANGNHLPGPEDTLVTDTLLQKNEAERQKGLQEVHITLAARLGEAEEKIKVLHSALKATQTELLELRRKYDEEAASKADEVGLIMTNLEKANQRAEAAQREVESLREQLASVNSSIRLACCSPQGPSGEKVSFALCSGPRLEAALASKDREILRLLKDAQQLRHSLQELEEVSANQIADLERQLAAKSEAIEKLQEKLEAQADYEEIKTELSILRAMKLASSTCSLPQTLAKPDDPLLVAKDVFFPTQKFLLEKPALLASPEEDPSEDDSIKGSLGTEPPYPPQLPPPPGPEDPLSPSPAQPLLGPSLGPDGPRTFSLSPFPSLAPGERLAGDSLLSKHMMGPAAFKGETGNLLAFPPTFYGGAKPPSAPAASVPCPEPTGAPEAVDGAGPEEEQLDTAEIAFQVKEQLLKHNIGQRVFGHYVLGLSQGSVSEILARPKPWRKLTVKGKEPFIKMKQFLSDEQNVLALRTIQVRQRGSITPRIRTPETGSDDAIKSILEQAKKEIESQKGGESKNSPASVSIPNGTASSSTSEDAIKNILEQARREMQAQQQALLEMESGPRGRSVPPSPPERPSPATASQNGALTCVKQEDGGGGSGSSSTVQAPLAVLSPAAFVQRIIRKVKSEIGDAGYFDHHWASDRGLLSRPYASVSPSLSSSSSYSGQPNGRAWPRGDEATIAPEDEAAMGEDEAPRVGELKAEAGAPEVGGGRLPYYPAYVPRTLKPTVPPLTPEQYELYMYREVDTLELTRQVKEKLAKNGICQRIFGEKVLGLSQGSVSDMLSRPKPWSKLTQKGREPFIRMQLWLSDQLGQGQGQAPTQQPSASQASPTEPTSSPSPPPSPTEPEKTSQEPLGLSLESSKENQQPEGRASSSLGGKPFSSSQAAGGIQEMVAMSPELDTYSITKRVKEVLTDNNLGQRLFGESILGLTQGSVSDLLSRPKPWHKLSLKGREPFVRMQLWLSDPHNVEKLRDMKKLEKKAYLKRRYGLIGTGSDSESPAAHSECPSPCLQPQELSLMQAKKPRVVLAPAEKEALRKAYQLEPYPSQQTIELLSFQLNLKTNTVINWFHNYRSRMRREMLVEGTQDDPDFDPSGGPNVLTPGHTHREPTPQSPDSETEDQKPPMKSLELQEPEGPLQRAAPDRALVKIKQEEGLEVDGDSQPQDVGDPDRGQDGPKEEHTHPLGNSDLSELAPGPFLSGTPNPDCPSLHNPQEKGTGEQVHSEPLSFKSTSESSCCSLEGPPNSPSVISSPDLTTCVSPAPSSSAPISPSLPGAPPAKVPSTSPTGDTAAALHPSTKVNPNLQRRHEKMANLNSIIYRLERAANREEVLEWEF</sequence>
<proteinExistence type="evidence at transcript level"/>
<dbReference type="EMBL" id="U45665">
    <property type="protein sequence ID" value="AAC52762.1"/>
    <property type="molecule type" value="mRNA"/>
</dbReference>
<dbReference type="EMBL" id="BC065113">
    <property type="protein sequence ID" value="AAH65113.1"/>
    <property type="molecule type" value="mRNA"/>
</dbReference>
<dbReference type="CCDS" id="CCDS39251.1"/>
<dbReference type="PIR" id="T30817">
    <property type="entry name" value="T30817"/>
</dbReference>
<dbReference type="RefSeq" id="NP_001299837.1">
    <property type="nucleotide sequence ID" value="NM_001312908.2"/>
</dbReference>
<dbReference type="RefSeq" id="NP_001415445.1">
    <property type="nucleotide sequence ID" value="NM_001428516.1"/>
</dbReference>
<dbReference type="RefSeq" id="NP_001415446.1">
    <property type="nucleotide sequence ID" value="NM_001428517.1"/>
</dbReference>
<dbReference type="RefSeq" id="NP_031830.2">
    <property type="nucleotide sequence ID" value="NM_007804.2"/>
</dbReference>
<dbReference type="RefSeq" id="XP_030109978.1">
    <property type="nucleotide sequence ID" value="XM_030254118.2"/>
</dbReference>
<dbReference type="RefSeq" id="XP_030109979.1">
    <property type="nucleotide sequence ID" value="XM_030254119.2"/>
</dbReference>
<dbReference type="SMR" id="P70298"/>
<dbReference type="FunCoup" id="P70298">
    <property type="interactions" value="1045"/>
</dbReference>
<dbReference type="IntAct" id="P70298">
    <property type="interactions" value="1"/>
</dbReference>
<dbReference type="STRING" id="10090.ENSMUSP00000107381"/>
<dbReference type="GlyGen" id="P70298">
    <property type="glycosylation" value="1 site"/>
</dbReference>
<dbReference type="iPTMnet" id="P70298"/>
<dbReference type="PhosphoSitePlus" id="P70298"/>
<dbReference type="PaxDb" id="10090-ENSMUSP00000107381"/>
<dbReference type="PeptideAtlas" id="P70298"/>
<dbReference type="ProteomicsDB" id="284068"/>
<dbReference type="Antibodypedia" id="31073">
    <property type="antibodies" value="78 antibodies from 20 providers"/>
</dbReference>
<dbReference type="DNASU" id="13048"/>
<dbReference type="Ensembl" id="ENSMUST00000086317.12">
    <property type="protein sequence ID" value="ENSMUSP00000083497.6"/>
    <property type="gene ID" value="ENSMUSG00000042589.19"/>
</dbReference>
<dbReference type="Ensembl" id="ENSMUST00000111752.10">
    <property type="protein sequence ID" value="ENSMUSP00000107381.3"/>
    <property type="gene ID" value="ENSMUSG00000042589.19"/>
</dbReference>
<dbReference type="Ensembl" id="ENSMUST00000168288.9">
    <property type="protein sequence ID" value="ENSMUSP00000130302.3"/>
    <property type="gene ID" value="ENSMUSG00000042589.19"/>
</dbReference>
<dbReference type="GeneID" id="13048"/>
<dbReference type="KEGG" id="mmu:13048"/>
<dbReference type="UCSC" id="uc008zkm.1">
    <property type="organism name" value="mouse"/>
</dbReference>
<dbReference type="AGR" id="MGI:107321"/>
<dbReference type="CTD" id="23316"/>
<dbReference type="MGI" id="MGI:107321">
    <property type="gene designation" value="Cux2"/>
</dbReference>
<dbReference type="VEuPathDB" id="HostDB:ENSMUSG00000042589"/>
<dbReference type="eggNOG" id="KOG0963">
    <property type="taxonomic scope" value="Eukaryota"/>
</dbReference>
<dbReference type="eggNOG" id="KOG2252">
    <property type="taxonomic scope" value="Eukaryota"/>
</dbReference>
<dbReference type="GeneTree" id="ENSGT00940000160241"/>
<dbReference type="HOGENOM" id="CLU_005104_1_0_1"/>
<dbReference type="InParanoid" id="P70298"/>
<dbReference type="OMA" id="FHNYSRM"/>
<dbReference type="OrthoDB" id="10257567at2759"/>
<dbReference type="PhylomeDB" id="P70298"/>
<dbReference type="TreeFam" id="TF318206"/>
<dbReference type="BioGRID-ORCS" id="13048">
    <property type="hits" value="2 hits in 76 CRISPR screens"/>
</dbReference>
<dbReference type="ChiTaRS" id="Cux2">
    <property type="organism name" value="mouse"/>
</dbReference>
<dbReference type="PRO" id="PR:P70298"/>
<dbReference type="Proteomes" id="UP000000589">
    <property type="component" value="Chromosome 5"/>
</dbReference>
<dbReference type="RNAct" id="P70298">
    <property type="molecule type" value="protein"/>
</dbReference>
<dbReference type="Bgee" id="ENSMUSG00000042589">
    <property type="expression patterns" value="Expressed in layer of neocortex and 223 other cell types or tissues"/>
</dbReference>
<dbReference type="ExpressionAtlas" id="P70298">
    <property type="expression patterns" value="baseline and differential"/>
</dbReference>
<dbReference type="GO" id="GO:0005634">
    <property type="term" value="C:nucleus"/>
    <property type="evidence" value="ECO:0000314"/>
    <property type="project" value="MGI"/>
</dbReference>
<dbReference type="GO" id="GO:0003677">
    <property type="term" value="F:DNA binding"/>
    <property type="evidence" value="ECO:0000314"/>
    <property type="project" value="MGI"/>
</dbReference>
<dbReference type="GO" id="GO:0001227">
    <property type="term" value="F:DNA-binding transcription repressor activity, RNA polymerase II-specific"/>
    <property type="evidence" value="ECO:0000314"/>
    <property type="project" value="NTNU_SB"/>
</dbReference>
<dbReference type="GO" id="GO:0000978">
    <property type="term" value="F:RNA polymerase II cis-regulatory region sequence-specific DNA binding"/>
    <property type="evidence" value="ECO:0000314"/>
    <property type="project" value="NTNU_SB"/>
</dbReference>
<dbReference type="GO" id="GO:0000977">
    <property type="term" value="F:RNA polymerase II transcription regulatory region sequence-specific DNA binding"/>
    <property type="evidence" value="ECO:0000315"/>
    <property type="project" value="UniProtKB"/>
</dbReference>
<dbReference type="GO" id="GO:0045892">
    <property type="term" value="P:negative regulation of DNA-templated transcription"/>
    <property type="evidence" value="ECO:0000314"/>
    <property type="project" value="MGI"/>
</dbReference>
<dbReference type="GO" id="GO:0000122">
    <property type="term" value="P:negative regulation of transcription by RNA polymerase II"/>
    <property type="evidence" value="ECO:0000314"/>
    <property type="project" value="NTNU_SB"/>
</dbReference>
<dbReference type="GO" id="GO:0050775">
    <property type="term" value="P:positive regulation of dendrite morphogenesis"/>
    <property type="evidence" value="ECO:0000315"/>
    <property type="project" value="UniProtKB"/>
</dbReference>
<dbReference type="GO" id="GO:0061003">
    <property type="term" value="P:positive regulation of dendritic spine morphogenesis"/>
    <property type="evidence" value="ECO:0000315"/>
    <property type="project" value="UniProtKB"/>
</dbReference>
<dbReference type="GO" id="GO:2000463">
    <property type="term" value="P:positive regulation of excitatory postsynaptic potential"/>
    <property type="evidence" value="ECO:0000315"/>
    <property type="project" value="UniProtKB"/>
</dbReference>
<dbReference type="GO" id="GO:0010628">
    <property type="term" value="P:positive regulation of gene expression"/>
    <property type="evidence" value="ECO:0000315"/>
    <property type="project" value="UniProtKB"/>
</dbReference>
<dbReference type="GO" id="GO:0051965">
    <property type="term" value="P:positive regulation of synapse assembly"/>
    <property type="evidence" value="ECO:0000315"/>
    <property type="project" value="UniProtKB"/>
</dbReference>
<dbReference type="GO" id="GO:0007614">
    <property type="term" value="P:short-term memory"/>
    <property type="evidence" value="ECO:0000315"/>
    <property type="project" value="UniProtKB"/>
</dbReference>
<dbReference type="CDD" id="cd00086">
    <property type="entry name" value="homeodomain"/>
    <property type="match status" value="1"/>
</dbReference>
<dbReference type="FunFam" id="1.10.260.40:FF:000004">
    <property type="entry name" value="Cut-like homeobox 1a"/>
    <property type="match status" value="2"/>
</dbReference>
<dbReference type="FunFam" id="1.10.260.40:FF:000010">
    <property type="entry name" value="Cut-like homeobox 1a"/>
    <property type="match status" value="1"/>
</dbReference>
<dbReference type="FunFam" id="1.10.10.60:FF:000116">
    <property type="entry name" value="Cut-like homeobox 2b"/>
    <property type="match status" value="1"/>
</dbReference>
<dbReference type="Gene3D" id="1.10.10.60">
    <property type="entry name" value="Homeodomain-like"/>
    <property type="match status" value="1"/>
</dbReference>
<dbReference type="Gene3D" id="1.10.260.40">
    <property type="entry name" value="lambda repressor-like DNA-binding domains"/>
    <property type="match status" value="3"/>
</dbReference>
<dbReference type="InterPro" id="IPR003350">
    <property type="entry name" value="CUT_dom"/>
</dbReference>
<dbReference type="InterPro" id="IPR001356">
    <property type="entry name" value="HD"/>
</dbReference>
<dbReference type="InterPro" id="IPR017970">
    <property type="entry name" value="Homeobox_CS"/>
</dbReference>
<dbReference type="InterPro" id="IPR009057">
    <property type="entry name" value="Homeodomain-like_sf"/>
</dbReference>
<dbReference type="InterPro" id="IPR010982">
    <property type="entry name" value="Lambda_DNA-bd_dom_sf"/>
</dbReference>
<dbReference type="PANTHER" id="PTHR14043">
    <property type="entry name" value="CCAAT DISPLACEMENT PROTEIN-RELATED"/>
    <property type="match status" value="1"/>
</dbReference>
<dbReference type="PANTHER" id="PTHR14043:SF5">
    <property type="entry name" value="HOMEOBOX PROTEIN CUT-LIKE 2"/>
    <property type="match status" value="1"/>
</dbReference>
<dbReference type="Pfam" id="PF02376">
    <property type="entry name" value="CUT"/>
    <property type="match status" value="3"/>
</dbReference>
<dbReference type="Pfam" id="PF25398">
    <property type="entry name" value="CUX1_N"/>
    <property type="match status" value="1"/>
</dbReference>
<dbReference type="Pfam" id="PF00046">
    <property type="entry name" value="Homeodomain"/>
    <property type="match status" value="1"/>
</dbReference>
<dbReference type="SMART" id="SM01109">
    <property type="entry name" value="CUT"/>
    <property type="match status" value="3"/>
</dbReference>
<dbReference type="SMART" id="SM00389">
    <property type="entry name" value="HOX"/>
    <property type="match status" value="1"/>
</dbReference>
<dbReference type="SUPFAM" id="SSF46689">
    <property type="entry name" value="Homeodomain-like"/>
    <property type="match status" value="1"/>
</dbReference>
<dbReference type="SUPFAM" id="SSF47413">
    <property type="entry name" value="lambda repressor-like DNA-binding domains"/>
    <property type="match status" value="3"/>
</dbReference>
<dbReference type="PROSITE" id="PS51042">
    <property type="entry name" value="CUT"/>
    <property type="match status" value="3"/>
</dbReference>
<dbReference type="PROSITE" id="PS00027">
    <property type="entry name" value="HOMEOBOX_1"/>
    <property type="match status" value="1"/>
</dbReference>
<dbReference type="PROSITE" id="PS50071">
    <property type="entry name" value="HOMEOBOX_2"/>
    <property type="match status" value="1"/>
</dbReference>
<reference key="1">
    <citation type="journal article" date="1996" name="J. Biol. Chem.">
        <title>Primary structure, neural-specific expression, and chromosomal localization of Cux-2, a second murine homeobox gene related to Drosophila cut.</title>
        <authorList>
            <person name="Quaggin S.E."/>
            <person name="Vanden Heuvel G.B."/>
            <person name="Golden K."/>
            <person name="Bodmer R."/>
            <person name="Igarashi P."/>
        </authorList>
    </citation>
    <scope>NUCLEOTIDE SEQUENCE [MRNA]</scope>
</reference>
<reference key="2">
    <citation type="journal article" date="2004" name="Genome Res.">
        <title>The status, quality, and expansion of the NIH full-length cDNA project: the Mammalian Gene Collection (MGC).</title>
        <authorList>
            <consortium name="The MGC Project Team"/>
        </authorList>
    </citation>
    <scope>NUCLEOTIDE SEQUENCE [LARGE SCALE MRNA]</scope>
    <source>
        <strain>C57BL/6J</strain>
        <tissue>Brain</tissue>
    </source>
</reference>
<reference key="3">
    <citation type="journal article" date="2008" name="Cereb. Cortex">
        <title>Cux-2 controls the proliferation of neuronal intermediate precursors of the cortical subventricular zone.</title>
        <authorList>
            <person name="Cubelos B."/>
            <person name="Sebastian-Serrano A."/>
            <person name="Kim S."/>
            <person name="Moreno-Ortiz C."/>
            <person name="Redondo J.M."/>
            <person name="Walsh C.A."/>
            <person name="Nieto M."/>
        </authorList>
    </citation>
    <scope>FUNCTION</scope>
    <scope>DISRUPTION PHENOTYPE</scope>
</reference>
<reference key="4">
    <citation type="journal article" date="2010" name="Neuron">
        <title>Cux1 and Cux2 regulate dendritic branching, spine morphology, and synapses of the upper layer neurons of the cortex.</title>
        <authorList>
            <person name="Cubelos B."/>
            <person name="Sebastian-Serrano A."/>
            <person name="Beccari L."/>
            <person name="Calcagnotto M.E."/>
            <person name="Cisneros E."/>
            <person name="Kim S."/>
            <person name="Dopazo A."/>
            <person name="Alvarez-Dolado M."/>
            <person name="Redondo J.M."/>
            <person name="Bovolenta P."/>
            <person name="Walsh C.A."/>
            <person name="Nieto M."/>
        </authorList>
    </citation>
    <scope>FUNCTION</scope>
    <scope>DISRUPTION PHENOTYPE</scope>
</reference>
<comment type="function">
    <text evidence="6 7">Transcription factor involved in the control of neuronal proliferation and differentiation in the brain (PubMed:18033766, PubMed:20510857). Regulates dendrite development and branching, dendritic spine formation, and synaptogenesis in cortical layers II-III (PubMed:20510857). Binds to DNA in a sequence-specific manner.</text>
</comment>
<comment type="subcellular location">
    <subcellularLocation>
        <location>Nucleus</location>
    </subcellularLocation>
</comment>
<comment type="tissue specificity">
    <text>Restricted to neural tissues. Expressed exclusively in the central and peripheral nervous systems.</text>
</comment>
<comment type="disruption phenotype">
    <text evidence="6 7">Knockout mice show moderately but consistently bigger brains than wild-type animals. Cell density and thickness of upper cortical layers (II-IV) are increased, while there are no differences in neuronal density in layers V and VI (PubMed:18033766). Neurons in layer II-III show simpler morphologies, with a significant decrease in the dendritic length and the number of branches, as well as a severe reduction of dendritic spines density associated with synaptic defects. The working memory is impaired (PubMed:20510857).</text>
</comment>
<comment type="similarity">
    <text evidence="8">Belongs to the CUT homeobox family.</text>
</comment>
<gene>
    <name type="primary">Cux2</name>
    <name type="synonym">Cutl2</name>
</gene>
<protein>
    <recommendedName>
        <fullName>Homeobox protein cut-like 2</fullName>
    </recommendedName>
    <alternativeName>
        <fullName>Homeobox protein Cux-2</fullName>
    </alternativeName>
</protein>
<name>CUX2_MOUSE</name>
<feature type="chain" id="PRO_0000202397" description="Homeobox protein cut-like 2">
    <location>
        <begin position="1"/>
        <end position="1426"/>
    </location>
</feature>
<feature type="DNA-binding region" description="CUT 1" evidence="4">
    <location>
        <begin position="482"/>
        <end position="569"/>
    </location>
</feature>
<feature type="DNA-binding region" description="CUT 2" evidence="4">
    <location>
        <begin position="828"/>
        <end position="915"/>
    </location>
</feature>
<feature type="DNA-binding region" description="CUT 3" evidence="4">
    <location>
        <begin position="983"/>
        <end position="1070"/>
    </location>
</feature>
<feature type="DNA-binding region" description="Homeobox" evidence="3">
    <location>
        <begin position="1113"/>
        <end position="1172"/>
    </location>
</feature>
<feature type="region of interest" description="Disordered" evidence="5">
    <location>
        <begin position="77"/>
        <end position="104"/>
    </location>
</feature>
<feature type="region of interest" description="Disordered" evidence="5">
    <location>
        <begin position="351"/>
        <end position="419"/>
    </location>
</feature>
<feature type="region of interest" description="Disordered" evidence="5">
    <location>
        <begin position="460"/>
        <end position="488"/>
    </location>
</feature>
<feature type="region of interest" description="Disordered" evidence="5">
    <location>
        <begin position="599"/>
        <end position="628"/>
    </location>
</feature>
<feature type="region of interest" description="Disordered" evidence="5">
    <location>
        <begin position="653"/>
        <end position="676"/>
    </location>
</feature>
<feature type="region of interest" description="Disordered" evidence="5">
    <location>
        <begin position="743"/>
        <end position="769"/>
    </location>
</feature>
<feature type="region of interest" description="Disordered" evidence="5">
    <location>
        <begin position="904"/>
        <end position="977"/>
    </location>
</feature>
<feature type="region of interest" description="Disordered" evidence="5">
    <location>
        <begin position="1177"/>
        <end position="1392"/>
    </location>
</feature>
<feature type="coiled-coil region" evidence="2">
    <location>
        <begin position="131"/>
        <end position="311"/>
    </location>
</feature>
<feature type="coiled-coil region" evidence="2">
    <location>
        <begin position="587"/>
        <end position="655"/>
    </location>
</feature>
<feature type="compositionally biased region" description="Pro residues" evidence="5">
    <location>
        <begin position="374"/>
        <end position="395"/>
    </location>
</feature>
<feature type="compositionally biased region" description="Low complexity" evidence="5">
    <location>
        <begin position="397"/>
        <end position="408"/>
    </location>
</feature>
<feature type="compositionally biased region" description="Low complexity" evidence="5">
    <location>
        <begin position="460"/>
        <end position="470"/>
    </location>
</feature>
<feature type="compositionally biased region" description="Polar residues" evidence="5">
    <location>
        <begin position="608"/>
        <end position="628"/>
    </location>
</feature>
<feature type="compositionally biased region" description="Low complexity" evidence="5">
    <location>
        <begin position="743"/>
        <end position="757"/>
    </location>
</feature>
<feature type="compositionally biased region" description="Low complexity" evidence="5">
    <location>
        <begin position="910"/>
        <end position="928"/>
    </location>
</feature>
<feature type="compositionally biased region" description="Low complexity" evidence="5">
    <location>
        <begin position="965"/>
        <end position="976"/>
    </location>
</feature>
<feature type="compositionally biased region" description="Basic and acidic residues" evidence="5">
    <location>
        <begin position="1233"/>
        <end position="1245"/>
    </location>
</feature>
<feature type="compositionally biased region" description="Basic and acidic residues" evidence="5">
    <location>
        <begin position="1260"/>
        <end position="1274"/>
    </location>
</feature>
<feature type="compositionally biased region" description="Low complexity" evidence="5">
    <location>
        <begin position="1318"/>
        <end position="1332"/>
    </location>
</feature>
<feature type="compositionally biased region" description="Polar residues" evidence="5">
    <location>
        <begin position="1338"/>
        <end position="1350"/>
    </location>
</feature>
<feature type="compositionally biased region" description="Low complexity" evidence="5">
    <location>
        <begin position="1351"/>
        <end position="1364"/>
    </location>
</feature>
<feature type="modified residue" description="Phosphoserine" evidence="1">
    <location>
        <position position="81"/>
    </location>
</feature>
<feature type="sequence conflict" description="In Ref. 1; AAC52762." evidence="8" ref="1">
    <original>S</original>
    <variation>G</variation>
    <location>
        <position position="199"/>
    </location>
</feature>
<feature type="sequence conflict" description="In Ref. 1; AAC52762." evidence="8" ref="1">
    <original>S</original>
    <variation>N</variation>
    <location>
        <position position="209"/>
    </location>
</feature>
<feature type="sequence conflict" description="In Ref. 1; AAC52762." evidence="8" ref="1">
    <original>T</original>
    <variation>M</variation>
    <location>
        <position position="324"/>
    </location>
</feature>
<feature type="sequence conflict" description="In Ref. 1; AAC52762." evidence="8" ref="1">
    <original>T</original>
    <variation>N</variation>
    <location>
        <position position="410"/>
    </location>
</feature>
<keyword id="KW-0175">Coiled coil</keyword>
<keyword id="KW-0238">DNA-binding</keyword>
<keyword id="KW-0371">Homeobox</keyword>
<keyword id="KW-0539">Nucleus</keyword>
<keyword id="KW-0597">Phosphoprotein</keyword>
<keyword id="KW-1185">Reference proteome</keyword>
<keyword id="KW-0677">Repeat</keyword>
<keyword id="KW-0804">Transcription</keyword>
<keyword id="KW-0805">Transcription regulation</keyword>
<evidence type="ECO:0000250" key="1">
    <source>
        <dbReference type="UniProtKB" id="O14529"/>
    </source>
</evidence>
<evidence type="ECO:0000255" key="2"/>
<evidence type="ECO:0000255" key="3">
    <source>
        <dbReference type="PROSITE-ProRule" id="PRU00108"/>
    </source>
</evidence>
<evidence type="ECO:0000255" key="4">
    <source>
        <dbReference type="PROSITE-ProRule" id="PRU00374"/>
    </source>
</evidence>
<evidence type="ECO:0000256" key="5">
    <source>
        <dbReference type="SAM" id="MobiDB-lite"/>
    </source>
</evidence>
<evidence type="ECO:0000269" key="6">
    <source>
    </source>
</evidence>
<evidence type="ECO:0000269" key="7">
    <source>
    </source>
</evidence>
<evidence type="ECO:0000305" key="8"/>